<reference key="1">
    <citation type="submission" date="2008-02" db="EMBL/GenBank/DDBJ databases">
        <title>Complete sequence of Haemophilus somnus 2336.</title>
        <authorList>
            <consortium name="US DOE Joint Genome Institute"/>
            <person name="Siddaramappa S."/>
            <person name="Duncan A.J."/>
            <person name="Challacombe J.F."/>
            <person name="Rainey D."/>
            <person name="Gillaspy A.F."/>
            <person name="Carson M."/>
            <person name="Gipson J."/>
            <person name="Gipson M."/>
            <person name="Bruce D."/>
            <person name="Detter J.C."/>
            <person name="Han C.S."/>
            <person name="Land M."/>
            <person name="Tapia R."/>
            <person name="Thompson L.S."/>
            <person name="Orvis J."/>
            <person name="Zaitshik J."/>
            <person name="Barnes G."/>
            <person name="Brettin T.S."/>
            <person name="Dyer D.W."/>
            <person name="Inzana T.J."/>
        </authorList>
    </citation>
    <scope>NUCLEOTIDE SEQUENCE [LARGE SCALE GENOMIC DNA]</scope>
    <source>
        <strain>2336</strain>
    </source>
</reference>
<dbReference type="EMBL" id="CP000947">
    <property type="protein sequence ID" value="ACA32154.1"/>
    <property type="molecule type" value="Genomic_DNA"/>
</dbReference>
<dbReference type="RefSeq" id="WP_011609646.1">
    <property type="nucleotide sequence ID" value="NC_010519.1"/>
</dbReference>
<dbReference type="SMR" id="B0URV1"/>
<dbReference type="STRING" id="228400.HSM_0506"/>
<dbReference type="GeneID" id="31486785"/>
<dbReference type="KEGG" id="hsm:HSM_0506"/>
<dbReference type="HOGENOM" id="CLU_134863_5_2_6"/>
<dbReference type="GO" id="GO:0032153">
    <property type="term" value="C:cell division site"/>
    <property type="evidence" value="ECO:0007669"/>
    <property type="project" value="UniProtKB-UniRule"/>
</dbReference>
<dbReference type="GO" id="GO:0030428">
    <property type="term" value="C:cell septum"/>
    <property type="evidence" value="ECO:0007669"/>
    <property type="project" value="TreeGrafter"/>
</dbReference>
<dbReference type="GO" id="GO:0005886">
    <property type="term" value="C:plasma membrane"/>
    <property type="evidence" value="ECO:0007669"/>
    <property type="project" value="UniProtKB-SubCell"/>
</dbReference>
<dbReference type="GO" id="GO:0043093">
    <property type="term" value="P:FtsZ-dependent cytokinesis"/>
    <property type="evidence" value="ECO:0007669"/>
    <property type="project" value="UniProtKB-UniRule"/>
</dbReference>
<dbReference type="HAMAP" id="MF_00599">
    <property type="entry name" value="FtsB"/>
    <property type="match status" value="1"/>
</dbReference>
<dbReference type="InterPro" id="IPR023081">
    <property type="entry name" value="Cell_div_FtsB"/>
</dbReference>
<dbReference type="InterPro" id="IPR007060">
    <property type="entry name" value="FtsL/DivIC"/>
</dbReference>
<dbReference type="NCBIfam" id="NF002058">
    <property type="entry name" value="PRK00888.1"/>
    <property type="match status" value="1"/>
</dbReference>
<dbReference type="PANTHER" id="PTHR37485">
    <property type="entry name" value="CELL DIVISION PROTEIN FTSB"/>
    <property type="match status" value="1"/>
</dbReference>
<dbReference type="PANTHER" id="PTHR37485:SF1">
    <property type="entry name" value="CELL DIVISION PROTEIN FTSB"/>
    <property type="match status" value="1"/>
</dbReference>
<dbReference type="Pfam" id="PF04977">
    <property type="entry name" value="DivIC"/>
    <property type="match status" value="1"/>
</dbReference>
<gene>
    <name evidence="1" type="primary">ftsB</name>
    <name type="ordered locus">HSM_0506</name>
</gene>
<sequence>MRLFILSLFALLVMFQYDFWFGKNGYLDYQDIKAEIIQRKQENKKLSQRNQTIFAEIQDLKNGIEAIEERARMEHEMIKQNEVFYRIVKNKNR</sequence>
<feature type="chain" id="PRO_1000129932" description="Cell division protein FtsB">
    <location>
        <begin position="1"/>
        <end position="93"/>
    </location>
</feature>
<feature type="topological domain" description="Cytoplasmic" evidence="1">
    <location>
        <begin position="1"/>
        <end position="3"/>
    </location>
</feature>
<feature type="transmembrane region" description="Helical" evidence="1">
    <location>
        <begin position="4"/>
        <end position="21"/>
    </location>
</feature>
<feature type="topological domain" description="Periplasmic" evidence="1">
    <location>
        <begin position="22"/>
        <end position="93"/>
    </location>
</feature>
<feature type="coiled-coil region" evidence="1">
    <location>
        <begin position="28"/>
        <end position="76"/>
    </location>
</feature>
<evidence type="ECO:0000255" key="1">
    <source>
        <dbReference type="HAMAP-Rule" id="MF_00599"/>
    </source>
</evidence>
<keyword id="KW-0131">Cell cycle</keyword>
<keyword id="KW-0132">Cell division</keyword>
<keyword id="KW-0997">Cell inner membrane</keyword>
<keyword id="KW-1003">Cell membrane</keyword>
<keyword id="KW-0175">Coiled coil</keyword>
<keyword id="KW-0472">Membrane</keyword>
<keyword id="KW-0812">Transmembrane</keyword>
<keyword id="KW-1133">Transmembrane helix</keyword>
<name>FTSB_HISS2</name>
<organism>
    <name type="scientific">Histophilus somni (strain 2336)</name>
    <name type="common">Haemophilus somnus</name>
    <dbReference type="NCBI Taxonomy" id="228400"/>
    <lineage>
        <taxon>Bacteria</taxon>
        <taxon>Pseudomonadati</taxon>
        <taxon>Pseudomonadota</taxon>
        <taxon>Gammaproteobacteria</taxon>
        <taxon>Pasteurellales</taxon>
        <taxon>Pasteurellaceae</taxon>
        <taxon>Histophilus</taxon>
    </lineage>
</organism>
<comment type="function">
    <text evidence="1">Essential cell division protein. May link together the upstream cell division proteins, which are predominantly cytoplasmic, with the downstream cell division proteins, which are predominantly periplasmic.</text>
</comment>
<comment type="subunit">
    <text evidence="1">Part of a complex composed of FtsB, FtsL and FtsQ.</text>
</comment>
<comment type="subcellular location">
    <subcellularLocation>
        <location evidence="1">Cell inner membrane</location>
        <topology evidence="1">Single-pass type II membrane protein</topology>
    </subcellularLocation>
    <text evidence="1">Localizes to the division septum.</text>
</comment>
<comment type="similarity">
    <text evidence="1">Belongs to the FtsB family.</text>
</comment>
<protein>
    <recommendedName>
        <fullName evidence="1">Cell division protein FtsB</fullName>
    </recommendedName>
</protein>
<accession>B0URV1</accession>
<proteinExistence type="inferred from homology"/>